<sequence>MVKSPLKALVISLVFLFVLGFLFPTVTSLITEKALPNQSEGQPIKIDGKVYGSYLLAEAFNSSIFFHPRPSAIGYNLSESGSYPYSLGNPEVLNLTEKYLDEFLKDNPGINASQIPYAMLSYSASGLDPNIPLQGALIQIPRISIALHSITNNSVSLWENYLNDLVNKYTTQNFPFFGSYYVNIMYLNVNILEYLMNNGYIKSLNSIPP</sequence>
<proteinExistence type="inferred from homology"/>
<feature type="chain" id="PRO_0000197027" description="Potassium-transporting ATPase KdpC subunit">
    <location>
        <begin position="1"/>
        <end position="209"/>
    </location>
</feature>
<feature type="transmembrane region" description="Helical" evidence="1">
    <location>
        <begin position="10"/>
        <end position="30"/>
    </location>
</feature>
<name>KDPC_THEVO</name>
<comment type="function">
    <text evidence="1">Part of the high-affinity ATP-driven potassium transport (or Kdp) system, which catalyzes the hydrolysis of ATP coupled with the electrogenic transport of potassium into the cytoplasm. This subunit acts as a catalytic chaperone that increases the ATP-binding affinity of the ATP-hydrolyzing subunit KdpB by the formation of a transient KdpB/KdpC/ATP ternary complex.</text>
</comment>
<comment type="subunit">
    <text evidence="1">The system is composed of three essential subunits: KdpA, KdpB and KdpC.</text>
</comment>
<comment type="subcellular location">
    <subcellularLocation>
        <location evidence="1">Cell membrane</location>
        <topology evidence="1">Single-pass membrane protein</topology>
    </subcellularLocation>
</comment>
<comment type="similarity">
    <text evidence="1">Belongs to the KdpC family.</text>
</comment>
<gene>
    <name evidence="1" type="primary">kdpC</name>
    <name type="ordered locus">TV0501</name>
    <name type="ORF">TVG0489908</name>
</gene>
<accession>Q97BF5</accession>
<organism>
    <name type="scientific">Thermoplasma volcanium (strain ATCC 51530 / DSM 4299 / JCM 9571 / NBRC 15438 / GSS1)</name>
    <dbReference type="NCBI Taxonomy" id="273116"/>
    <lineage>
        <taxon>Archaea</taxon>
        <taxon>Methanobacteriati</taxon>
        <taxon>Thermoplasmatota</taxon>
        <taxon>Thermoplasmata</taxon>
        <taxon>Thermoplasmatales</taxon>
        <taxon>Thermoplasmataceae</taxon>
        <taxon>Thermoplasma</taxon>
    </lineage>
</organism>
<keyword id="KW-0067">ATP-binding</keyword>
<keyword id="KW-1003">Cell membrane</keyword>
<keyword id="KW-0406">Ion transport</keyword>
<keyword id="KW-0472">Membrane</keyword>
<keyword id="KW-0547">Nucleotide-binding</keyword>
<keyword id="KW-0630">Potassium</keyword>
<keyword id="KW-0633">Potassium transport</keyword>
<keyword id="KW-0812">Transmembrane</keyword>
<keyword id="KW-1133">Transmembrane helix</keyword>
<keyword id="KW-0813">Transport</keyword>
<dbReference type="EMBL" id="BA000011">
    <property type="protein sequence ID" value="BAB59643.1"/>
    <property type="molecule type" value="Genomic_DNA"/>
</dbReference>
<dbReference type="RefSeq" id="WP_010916759.1">
    <property type="nucleotide sequence ID" value="NC_002689.2"/>
</dbReference>
<dbReference type="SMR" id="Q97BF5"/>
<dbReference type="STRING" id="273116.gene:9381284"/>
<dbReference type="PaxDb" id="273116-14324716"/>
<dbReference type="GeneID" id="1441017"/>
<dbReference type="KEGG" id="tvo:TVG0489908"/>
<dbReference type="eggNOG" id="arCOG04805">
    <property type="taxonomic scope" value="Archaea"/>
</dbReference>
<dbReference type="HOGENOM" id="CLU_077094_1_0_2"/>
<dbReference type="OrthoDB" id="8035at2157"/>
<dbReference type="PhylomeDB" id="Q97BF5"/>
<dbReference type="Proteomes" id="UP000001017">
    <property type="component" value="Chromosome"/>
</dbReference>
<dbReference type="GO" id="GO:0005886">
    <property type="term" value="C:plasma membrane"/>
    <property type="evidence" value="ECO:0007669"/>
    <property type="project" value="UniProtKB-SubCell"/>
</dbReference>
<dbReference type="GO" id="GO:0005524">
    <property type="term" value="F:ATP binding"/>
    <property type="evidence" value="ECO:0007669"/>
    <property type="project" value="UniProtKB-UniRule"/>
</dbReference>
<dbReference type="GO" id="GO:0008556">
    <property type="term" value="F:P-type potassium transmembrane transporter activity"/>
    <property type="evidence" value="ECO:0007669"/>
    <property type="project" value="InterPro"/>
</dbReference>
<dbReference type="HAMAP" id="MF_00276">
    <property type="entry name" value="KdpC"/>
    <property type="match status" value="1"/>
</dbReference>
<dbReference type="InterPro" id="IPR003820">
    <property type="entry name" value="KdpC"/>
</dbReference>
<dbReference type="NCBIfam" id="NF001454">
    <property type="entry name" value="PRK00315.1"/>
    <property type="match status" value="1"/>
</dbReference>
<dbReference type="PANTHER" id="PTHR30042">
    <property type="entry name" value="POTASSIUM-TRANSPORTING ATPASE C CHAIN"/>
    <property type="match status" value="1"/>
</dbReference>
<dbReference type="PANTHER" id="PTHR30042:SF2">
    <property type="entry name" value="POTASSIUM-TRANSPORTING ATPASE KDPC SUBUNIT"/>
    <property type="match status" value="1"/>
</dbReference>
<dbReference type="Pfam" id="PF02669">
    <property type="entry name" value="KdpC"/>
    <property type="match status" value="1"/>
</dbReference>
<dbReference type="PIRSF" id="PIRSF001296">
    <property type="entry name" value="K_ATPase_KdpC"/>
    <property type="match status" value="1"/>
</dbReference>
<protein>
    <recommendedName>
        <fullName evidence="1">Potassium-transporting ATPase KdpC subunit</fullName>
    </recommendedName>
    <alternativeName>
        <fullName evidence="1">ATP phosphohydrolase [potassium-transporting] C chain</fullName>
    </alternativeName>
    <alternativeName>
        <fullName evidence="1">Potassium-binding and translocating subunit C</fullName>
    </alternativeName>
    <alternativeName>
        <fullName evidence="1">Potassium-translocating ATPase C chain</fullName>
    </alternativeName>
</protein>
<evidence type="ECO:0000255" key="1">
    <source>
        <dbReference type="HAMAP-Rule" id="MF_00276"/>
    </source>
</evidence>
<reference key="1">
    <citation type="journal article" date="2000" name="Proc. Natl. Acad. Sci. U.S.A.">
        <title>Archaeal adaptation to higher temperatures revealed by genomic sequence of Thermoplasma volcanium.</title>
        <authorList>
            <person name="Kawashima T."/>
            <person name="Amano N."/>
            <person name="Koike H."/>
            <person name="Makino S."/>
            <person name="Higuchi S."/>
            <person name="Kawashima-Ohya Y."/>
            <person name="Watanabe K."/>
            <person name="Yamazaki M."/>
            <person name="Kanehori K."/>
            <person name="Kawamoto T."/>
            <person name="Nunoshiba T."/>
            <person name="Yamamoto Y."/>
            <person name="Aramaki H."/>
            <person name="Makino K."/>
            <person name="Suzuki M."/>
        </authorList>
    </citation>
    <scope>NUCLEOTIDE SEQUENCE [LARGE SCALE GENOMIC DNA]</scope>
    <source>
        <strain>ATCC 51530 / DSM 4299 / JCM 9571 / NBRC 15438 / GSS1</strain>
    </source>
</reference>